<name>Y1631_ARCFU</name>
<feature type="chain" id="PRO_0000128040" description="Uncharacterized protein AF_1631">
    <location>
        <begin position="1"/>
        <end position="82"/>
    </location>
</feature>
<sequence>MDKKILSLRIVMDDEMETKFYEIKKELGLSSNAEVVRFLVNRFYKELVKKGGLAAVLLSNFANLVSTDWNIVESLGVFPIFG</sequence>
<dbReference type="EMBL" id="AE000782">
    <property type="protein sequence ID" value="AAB89630.1"/>
    <property type="molecule type" value="Genomic_DNA"/>
</dbReference>
<dbReference type="PIR" id="F69453">
    <property type="entry name" value="F69453"/>
</dbReference>
<dbReference type="SMR" id="O28642"/>
<dbReference type="STRING" id="224325.AF_1631"/>
<dbReference type="PaxDb" id="224325-AF_1631"/>
<dbReference type="EnsemblBacteria" id="AAB89630">
    <property type="protein sequence ID" value="AAB89630"/>
    <property type="gene ID" value="AF_1631"/>
</dbReference>
<dbReference type="KEGG" id="afu:AF_1631"/>
<dbReference type="eggNOG" id="arCOG12209">
    <property type="taxonomic scope" value="Archaea"/>
</dbReference>
<dbReference type="HOGENOM" id="CLU_2550048_0_0_2"/>
<dbReference type="Proteomes" id="UP000002199">
    <property type="component" value="Chromosome"/>
</dbReference>
<accession>O28642</accession>
<gene>
    <name type="ordered locus">AF_1631</name>
</gene>
<proteinExistence type="predicted"/>
<protein>
    <recommendedName>
        <fullName>Uncharacterized protein AF_1631</fullName>
    </recommendedName>
</protein>
<keyword id="KW-1185">Reference proteome</keyword>
<reference key="1">
    <citation type="journal article" date="1997" name="Nature">
        <title>The complete genome sequence of the hyperthermophilic, sulphate-reducing archaeon Archaeoglobus fulgidus.</title>
        <authorList>
            <person name="Klenk H.-P."/>
            <person name="Clayton R.A."/>
            <person name="Tomb J.-F."/>
            <person name="White O."/>
            <person name="Nelson K.E."/>
            <person name="Ketchum K.A."/>
            <person name="Dodson R.J."/>
            <person name="Gwinn M.L."/>
            <person name="Hickey E.K."/>
            <person name="Peterson J.D."/>
            <person name="Richardson D.L."/>
            <person name="Kerlavage A.R."/>
            <person name="Graham D.E."/>
            <person name="Kyrpides N.C."/>
            <person name="Fleischmann R.D."/>
            <person name="Quackenbush J."/>
            <person name="Lee N.H."/>
            <person name="Sutton G.G."/>
            <person name="Gill S.R."/>
            <person name="Kirkness E.F."/>
            <person name="Dougherty B.A."/>
            <person name="McKenney K."/>
            <person name="Adams M.D."/>
            <person name="Loftus B.J."/>
            <person name="Peterson S.N."/>
            <person name="Reich C.I."/>
            <person name="McNeil L.K."/>
            <person name="Badger J.H."/>
            <person name="Glodek A."/>
            <person name="Zhou L."/>
            <person name="Overbeek R."/>
            <person name="Gocayne J.D."/>
            <person name="Weidman J.F."/>
            <person name="McDonald L.A."/>
            <person name="Utterback T.R."/>
            <person name="Cotton M.D."/>
            <person name="Spriggs T."/>
            <person name="Artiach P."/>
            <person name="Kaine B.P."/>
            <person name="Sykes S.M."/>
            <person name="Sadow P.W."/>
            <person name="D'Andrea K.P."/>
            <person name="Bowman C."/>
            <person name="Fujii C."/>
            <person name="Garland S.A."/>
            <person name="Mason T.M."/>
            <person name="Olsen G.J."/>
            <person name="Fraser C.M."/>
            <person name="Smith H.O."/>
            <person name="Woese C.R."/>
            <person name="Venter J.C."/>
        </authorList>
    </citation>
    <scope>NUCLEOTIDE SEQUENCE [LARGE SCALE GENOMIC DNA]</scope>
    <source>
        <strain>ATCC 49558 / DSM 4304 / JCM 9628 / NBRC 100126 / VC-16</strain>
    </source>
</reference>
<organism>
    <name type="scientific">Archaeoglobus fulgidus (strain ATCC 49558 / DSM 4304 / JCM 9628 / NBRC 100126 / VC-16)</name>
    <dbReference type="NCBI Taxonomy" id="224325"/>
    <lineage>
        <taxon>Archaea</taxon>
        <taxon>Methanobacteriati</taxon>
        <taxon>Methanobacteriota</taxon>
        <taxon>Archaeoglobi</taxon>
        <taxon>Archaeoglobales</taxon>
        <taxon>Archaeoglobaceae</taxon>
        <taxon>Archaeoglobus</taxon>
    </lineage>
</organism>